<keyword id="KW-1185">Reference proteome</keyword>
<keyword id="KW-0808">Transferase</keyword>
<accession>P69903</accession>
<accession>P77407</accession>
<organism>
    <name type="scientific">Shigella flexneri</name>
    <dbReference type="NCBI Taxonomy" id="623"/>
    <lineage>
        <taxon>Bacteria</taxon>
        <taxon>Pseudomonadati</taxon>
        <taxon>Pseudomonadota</taxon>
        <taxon>Gammaproteobacteria</taxon>
        <taxon>Enterobacterales</taxon>
        <taxon>Enterobacteriaceae</taxon>
        <taxon>Shigella</taxon>
    </lineage>
</organism>
<gene>
    <name evidence="2" type="primary">frc</name>
    <name type="ordered locus">SF2441</name>
    <name type="ordered locus">S2578</name>
</gene>
<sequence length="416" mass="45828">MSTPLQGIKVLDFTGVQSGPSCTQMLAWFGADVIKIERPGVGDVTRHQLRDIPDIDALYFTMLNSNKRSIELNTKTAEGKEVMEKLIREADILVENFHPGAIDHMGFTWEHIQEINPRLIFGSIKGFDECSPYVNVKAYENVAQAAGGAASTTGFWDGPPLVSAAALGDSNTGMHLLIGLLAALLHREKTGRGQRVTMSMQDAVLNLCRVKLRDQQRLDKLGYLEEYPQYPNGTFGDAVPRGGNAGGGGQPGWILKCKGWETDPNAYIYFTIQEQNWENTCKAIGKPEWITDPAYSTAHARQPHIFDIFAEIEKYTVTIDKHEAVAYLTQFDIPCAPVLSMKEISLDPSLRQSGSVVEVEQPLRGKYLTVGCPMKFSAFTPDIKAAPLLGEHTAAVLQELGYSDDEIAAMKQNHAI</sequence>
<feature type="chain" id="PRO_0000194719" description="Formyl-CoA:oxalate CoA-transferase">
    <location>
        <begin position="1"/>
        <end position="416"/>
    </location>
</feature>
<feature type="active site" description="Nucleophile" evidence="2">
    <location>
        <position position="169"/>
    </location>
</feature>
<feature type="binding site" evidence="1">
    <location>
        <begin position="17"/>
        <end position="18"/>
    </location>
    <ligand>
        <name>CoA</name>
        <dbReference type="ChEBI" id="CHEBI:57287"/>
    </ligand>
</feature>
<feature type="binding site" evidence="2">
    <location>
        <position position="38"/>
    </location>
    <ligand>
        <name>CoA</name>
        <dbReference type="ChEBI" id="CHEBI:57287"/>
    </ligand>
</feature>
<feature type="binding site" evidence="1">
    <location>
        <begin position="72"/>
        <end position="75"/>
    </location>
    <ligand>
        <name>CoA</name>
        <dbReference type="ChEBI" id="CHEBI:57287"/>
    </ligand>
</feature>
<feature type="binding site" evidence="1">
    <location>
        <begin position="96"/>
        <end position="98"/>
    </location>
    <ligand>
        <name>CoA</name>
        <dbReference type="ChEBI" id="CHEBI:57287"/>
    </ligand>
</feature>
<feature type="binding site" evidence="2">
    <location>
        <position position="104"/>
    </location>
    <ligand>
        <name>CoA</name>
        <dbReference type="ChEBI" id="CHEBI:57287"/>
    </ligand>
</feature>
<feature type="binding site" evidence="1">
    <location>
        <begin position="137"/>
        <end position="140"/>
    </location>
    <ligand>
        <name>CoA</name>
        <dbReference type="ChEBI" id="CHEBI:57287"/>
    </ligand>
</feature>
<feature type="binding site" evidence="1">
    <location>
        <begin position="248"/>
        <end position="250"/>
    </location>
    <ligand>
        <name>substrate</name>
    </ligand>
</feature>
<feature type="binding site" evidence="1">
    <location>
        <begin position="273"/>
        <end position="275"/>
    </location>
    <ligand>
        <name>CoA</name>
        <dbReference type="ChEBI" id="CHEBI:57287"/>
    </ligand>
</feature>
<dbReference type="EC" id="2.8.3.16" evidence="2"/>
<dbReference type="EMBL" id="AE005674">
    <property type="protein sequence ID" value="AAN43952.1"/>
    <property type="molecule type" value="Genomic_DNA"/>
</dbReference>
<dbReference type="EMBL" id="AE014073">
    <property type="protein sequence ID" value="AAP17761.1"/>
    <property type="molecule type" value="Genomic_DNA"/>
</dbReference>
<dbReference type="RefSeq" id="NP_708245.1">
    <property type="nucleotide sequence ID" value="NC_004337.2"/>
</dbReference>
<dbReference type="RefSeq" id="WP_000106759.1">
    <property type="nucleotide sequence ID" value="NZ_WPGV01000001.1"/>
</dbReference>
<dbReference type="SMR" id="P69903"/>
<dbReference type="STRING" id="198214.SF2441"/>
<dbReference type="DrugBank" id="DB01992">
    <property type="generic name" value="Coenzyme A"/>
</dbReference>
<dbReference type="PaxDb" id="198214-SF2441"/>
<dbReference type="GeneID" id="1025581"/>
<dbReference type="GeneID" id="75202557"/>
<dbReference type="KEGG" id="sfl:SF2441"/>
<dbReference type="KEGG" id="sfx:S2578"/>
<dbReference type="PATRIC" id="fig|198214.7.peg.2915"/>
<dbReference type="HOGENOM" id="CLU_033975_2_1_6"/>
<dbReference type="BRENDA" id="2.8.3.16">
    <property type="organism ID" value="5712"/>
</dbReference>
<dbReference type="UniPathway" id="UPA00540">
    <property type="reaction ID" value="UER00598"/>
</dbReference>
<dbReference type="Proteomes" id="UP000001006">
    <property type="component" value="Chromosome"/>
</dbReference>
<dbReference type="Proteomes" id="UP000002673">
    <property type="component" value="Chromosome"/>
</dbReference>
<dbReference type="GO" id="GO:0033608">
    <property type="term" value="F:formyl-CoA transferase activity"/>
    <property type="evidence" value="ECO:0007669"/>
    <property type="project" value="UniProtKB-EC"/>
</dbReference>
<dbReference type="GO" id="GO:0033611">
    <property type="term" value="P:oxalate catabolic process"/>
    <property type="evidence" value="ECO:0007669"/>
    <property type="project" value="UniProtKB-UniRule"/>
</dbReference>
<dbReference type="Gene3D" id="3.40.50.10540">
    <property type="entry name" value="Crotonobetainyl-coa:carnitine coa-transferase, domain 1"/>
    <property type="match status" value="1"/>
</dbReference>
<dbReference type="Gene3D" id="3.30.1540.10">
    <property type="entry name" value="formyl-coa transferase, domain 3"/>
    <property type="match status" value="1"/>
</dbReference>
<dbReference type="HAMAP" id="MF_00742">
    <property type="entry name" value="Formyl_CoA_transfer"/>
    <property type="match status" value="1"/>
</dbReference>
<dbReference type="InterPro" id="IPR050483">
    <property type="entry name" value="CoA-transferase_III_domain"/>
</dbReference>
<dbReference type="InterPro" id="IPR003673">
    <property type="entry name" value="CoA-Trfase_fam_III"/>
</dbReference>
<dbReference type="InterPro" id="IPR044855">
    <property type="entry name" value="CoA-Trfase_III_dom3_sf"/>
</dbReference>
<dbReference type="InterPro" id="IPR023606">
    <property type="entry name" value="CoA-Trfase_III_dom_1_sf"/>
</dbReference>
<dbReference type="InterPro" id="IPR017659">
    <property type="entry name" value="Formyl_CoA_transfer"/>
</dbReference>
<dbReference type="NCBIfam" id="TIGR03253">
    <property type="entry name" value="oxalate_frc"/>
    <property type="match status" value="1"/>
</dbReference>
<dbReference type="NCBIfam" id="NF003809">
    <property type="entry name" value="PRK05398.1"/>
    <property type="match status" value="1"/>
</dbReference>
<dbReference type="PANTHER" id="PTHR48207">
    <property type="entry name" value="SUCCINATE--HYDROXYMETHYLGLUTARATE COA-TRANSFERASE"/>
    <property type="match status" value="1"/>
</dbReference>
<dbReference type="PANTHER" id="PTHR48207:SF3">
    <property type="entry name" value="SUCCINATE--HYDROXYMETHYLGLUTARATE COA-TRANSFERASE"/>
    <property type="match status" value="1"/>
</dbReference>
<dbReference type="Pfam" id="PF02515">
    <property type="entry name" value="CoA_transf_3"/>
    <property type="match status" value="1"/>
</dbReference>
<dbReference type="SUPFAM" id="SSF89796">
    <property type="entry name" value="CoA-transferase family III (CaiB/BaiF)"/>
    <property type="match status" value="1"/>
</dbReference>
<evidence type="ECO:0000250" key="1"/>
<evidence type="ECO:0000255" key="2">
    <source>
        <dbReference type="HAMAP-Rule" id="MF_00742"/>
    </source>
</evidence>
<protein>
    <recommendedName>
        <fullName>Formyl-CoA:oxalate CoA-transferase</fullName>
        <shortName>FCOCT</shortName>
        <ecNumber evidence="2">2.8.3.16</ecNumber>
    </recommendedName>
    <alternativeName>
        <fullName evidence="2">Formyl-coenzyme A transferase</fullName>
        <shortName evidence="2">Formyl-CoA transferase</shortName>
    </alternativeName>
</protein>
<name>FCTA_SHIFL</name>
<reference key="1">
    <citation type="journal article" date="2002" name="Nucleic Acids Res.">
        <title>Genome sequence of Shigella flexneri 2a: insights into pathogenicity through comparison with genomes of Escherichia coli K12 and O157.</title>
        <authorList>
            <person name="Jin Q."/>
            <person name="Yuan Z."/>
            <person name="Xu J."/>
            <person name="Wang Y."/>
            <person name="Shen Y."/>
            <person name="Lu W."/>
            <person name="Wang J."/>
            <person name="Liu H."/>
            <person name="Yang J."/>
            <person name="Yang F."/>
            <person name="Zhang X."/>
            <person name="Zhang J."/>
            <person name="Yang G."/>
            <person name="Wu H."/>
            <person name="Qu D."/>
            <person name="Dong J."/>
            <person name="Sun L."/>
            <person name="Xue Y."/>
            <person name="Zhao A."/>
            <person name="Gao Y."/>
            <person name="Zhu J."/>
            <person name="Kan B."/>
            <person name="Ding K."/>
            <person name="Chen S."/>
            <person name="Cheng H."/>
            <person name="Yao Z."/>
            <person name="He B."/>
            <person name="Chen R."/>
            <person name="Ma D."/>
            <person name="Qiang B."/>
            <person name="Wen Y."/>
            <person name="Hou Y."/>
            <person name="Yu J."/>
        </authorList>
    </citation>
    <scope>NUCLEOTIDE SEQUENCE [LARGE SCALE GENOMIC DNA]</scope>
    <source>
        <strain>301 / Serotype 2a</strain>
    </source>
</reference>
<reference key="2">
    <citation type="journal article" date="2003" name="Infect. Immun.">
        <title>Complete genome sequence and comparative genomics of Shigella flexneri serotype 2a strain 2457T.</title>
        <authorList>
            <person name="Wei J."/>
            <person name="Goldberg M.B."/>
            <person name="Burland V."/>
            <person name="Venkatesan M.M."/>
            <person name="Deng W."/>
            <person name="Fournier G."/>
            <person name="Mayhew G.F."/>
            <person name="Plunkett G. III"/>
            <person name="Rose D.J."/>
            <person name="Darling A."/>
            <person name="Mau B."/>
            <person name="Perna N.T."/>
            <person name="Payne S.M."/>
            <person name="Runyen-Janecky L.J."/>
            <person name="Zhou S."/>
            <person name="Schwartz D.C."/>
            <person name="Blattner F.R."/>
        </authorList>
    </citation>
    <scope>NUCLEOTIDE SEQUENCE [LARGE SCALE GENOMIC DNA]</scope>
    <source>
        <strain>ATCC 700930 / 2457T / Serotype 2a</strain>
    </source>
</reference>
<proteinExistence type="inferred from homology"/>
<comment type="function">
    <text evidence="1">Involved in the catabolism of oxalate and in the adapatation to low pH via the induction of the oxalate-dependent acid tolerance response (ATR). Catalyzes the transfer of the CoA moiety from formyl-CoA to oxalate (By similarity).</text>
</comment>
<comment type="catalytic activity">
    <reaction evidence="2">
        <text>formyl-CoA + oxalate = oxalyl-CoA + formate</text>
        <dbReference type="Rhea" id="RHEA:16545"/>
        <dbReference type="ChEBI" id="CHEBI:15740"/>
        <dbReference type="ChEBI" id="CHEBI:30623"/>
        <dbReference type="ChEBI" id="CHEBI:57376"/>
        <dbReference type="ChEBI" id="CHEBI:57388"/>
        <dbReference type="EC" id="2.8.3.16"/>
    </reaction>
</comment>
<comment type="pathway">
    <text evidence="2">Metabolic intermediate degradation; oxalate degradation; CO(2) and formate from oxalate: step 1/2.</text>
</comment>
<comment type="subunit">
    <text evidence="2">Homodimer.</text>
</comment>
<comment type="similarity">
    <text evidence="2">Belongs to the CoA-transferase III family. Frc subfamily.</text>
</comment>